<keyword id="KW-0963">Cytoplasm</keyword>
<keyword id="KW-0444">Lipid biosynthesis</keyword>
<keyword id="KW-0443">Lipid metabolism</keyword>
<keyword id="KW-0520">NAD</keyword>
<keyword id="KW-0521">NADP</keyword>
<keyword id="KW-0547">Nucleotide-binding</keyword>
<keyword id="KW-0560">Oxidoreductase</keyword>
<keyword id="KW-0594">Phospholipid biosynthesis</keyword>
<keyword id="KW-1208">Phospholipid metabolism</keyword>
<keyword id="KW-1185">Reference proteome</keyword>
<proteinExistence type="inferred from homology"/>
<dbReference type="EC" id="1.1.1.94" evidence="1"/>
<dbReference type="EMBL" id="CP001616">
    <property type="protein sequence ID" value="ACQ92138.1"/>
    <property type="molecule type" value="Genomic_DNA"/>
</dbReference>
<dbReference type="RefSeq" id="WP_012728737.1">
    <property type="nucleotide sequence ID" value="NC_012691.1"/>
</dbReference>
<dbReference type="SMR" id="C4LA09"/>
<dbReference type="STRING" id="595494.Tola_0509"/>
<dbReference type="KEGG" id="tau:Tola_0509"/>
<dbReference type="eggNOG" id="COG0240">
    <property type="taxonomic scope" value="Bacteria"/>
</dbReference>
<dbReference type="HOGENOM" id="CLU_033449_0_2_6"/>
<dbReference type="OrthoDB" id="9812273at2"/>
<dbReference type="UniPathway" id="UPA00940"/>
<dbReference type="Proteomes" id="UP000009073">
    <property type="component" value="Chromosome"/>
</dbReference>
<dbReference type="GO" id="GO:0005829">
    <property type="term" value="C:cytosol"/>
    <property type="evidence" value="ECO:0007669"/>
    <property type="project" value="TreeGrafter"/>
</dbReference>
<dbReference type="GO" id="GO:0047952">
    <property type="term" value="F:glycerol-3-phosphate dehydrogenase [NAD(P)+] activity"/>
    <property type="evidence" value="ECO:0007669"/>
    <property type="project" value="UniProtKB-UniRule"/>
</dbReference>
<dbReference type="GO" id="GO:0051287">
    <property type="term" value="F:NAD binding"/>
    <property type="evidence" value="ECO:0007669"/>
    <property type="project" value="InterPro"/>
</dbReference>
<dbReference type="GO" id="GO:0005975">
    <property type="term" value="P:carbohydrate metabolic process"/>
    <property type="evidence" value="ECO:0007669"/>
    <property type="project" value="InterPro"/>
</dbReference>
<dbReference type="GO" id="GO:0046167">
    <property type="term" value="P:glycerol-3-phosphate biosynthetic process"/>
    <property type="evidence" value="ECO:0007669"/>
    <property type="project" value="UniProtKB-UniRule"/>
</dbReference>
<dbReference type="GO" id="GO:0046168">
    <property type="term" value="P:glycerol-3-phosphate catabolic process"/>
    <property type="evidence" value="ECO:0007669"/>
    <property type="project" value="InterPro"/>
</dbReference>
<dbReference type="GO" id="GO:0046474">
    <property type="term" value="P:glycerophospholipid biosynthetic process"/>
    <property type="evidence" value="ECO:0007669"/>
    <property type="project" value="TreeGrafter"/>
</dbReference>
<dbReference type="FunFam" id="1.10.1040.10:FF:000001">
    <property type="entry name" value="Glycerol-3-phosphate dehydrogenase [NAD(P)+]"/>
    <property type="match status" value="1"/>
</dbReference>
<dbReference type="FunFam" id="3.40.50.720:FF:000019">
    <property type="entry name" value="Glycerol-3-phosphate dehydrogenase [NAD(P)+]"/>
    <property type="match status" value="1"/>
</dbReference>
<dbReference type="Gene3D" id="1.10.1040.10">
    <property type="entry name" value="N-(1-d-carboxylethyl)-l-norvaline Dehydrogenase, domain 2"/>
    <property type="match status" value="1"/>
</dbReference>
<dbReference type="Gene3D" id="3.40.50.720">
    <property type="entry name" value="NAD(P)-binding Rossmann-like Domain"/>
    <property type="match status" value="1"/>
</dbReference>
<dbReference type="HAMAP" id="MF_00394">
    <property type="entry name" value="NAD_Glyc3P_dehydrog"/>
    <property type="match status" value="1"/>
</dbReference>
<dbReference type="InterPro" id="IPR008927">
    <property type="entry name" value="6-PGluconate_DH-like_C_sf"/>
</dbReference>
<dbReference type="InterPro" id="IPR013328">
    <property type="entry name" value="6PGD_dom2"/>
</dbReference>
<dbReference type="InterPro" id="IPR006168">
    <property type="entry name" value="G3P_DH_NAD-dep"/>
</dbReference>
<dbReference type="InterPro" id="IPR006109">
    <property type="entry name" value="G3P_DH_NAD-dep_C"/>
</dbReference>
<dbReference type="InterPro" id="IPR011128">
    <property type="entry name" value="G3P_DH_NAD-dep_N"/>
</dbReference>
<dbReference type="InterPro" id="IPR036291">
    <property type="entry name" value="NAD(P)-bd_dom_sf"/>
</dbReference>
<dbReference type="NCBIfam" id="NF000939">
    <property type="entry name" value="PRK00094.1-1"/>
    <property type="match status" value="1"/>
</dbReference>
<dbReference type="NCBIfam" id="NF000940">
    <property type="entry name" value="PRK00094.1-2"/>
    <property type="match status" value="1"/>
</dbReference>
<dbReference type="NCBIfam" id="NF000942">
    <property type="entry name" value="PRK00094.1-4"/>
    <property type="match status" value="1"/>
</dbReference>
<dbReference type="PANTHER" id="PTHR11728">
    <property type="entry name" value="GLYCEROL-3-PHOSPHATE DEHYDROGENASE"/>
    <property type="match status" value="1"/>
</dbReference>
<dbReference type="PANTHER" id="PTHR11728:SF1">
    <property type="entry name" value="GLYCEROL-3-PHOSPHATE DEHYDROGENASE [NAD(+)] 2, CHLOROPLASTIC"/>
    <property type="match status" value="1"/>
</dbReference>
<dbReference type="Pfam" id="PF07479">
    <property type="entry name" value="NAD_Gly3P_dh_C"/>
    <property type="match status" value="1"/>
</dbReference>
<dbReference type="Pfam" id="PF01210">
    <property type="entry name" value="NAD_Gly3P_dh_N"/>
    <property type="match status" value="1"/>
</dbReference>
<dbReference type="PIRSF" id="PIRSF000114">
    <property type="entry name" value="Glycerol-3-P_dh"/>
    <property type="match status" value="1"/>
</dbReference>
<dbReference type="PRINTS" id="PR00077">
    <property type="entry name" value="GPDHDRGNASE"/>
</dbReference>
<dbReference type="SUPFAM" id="SSF48179">
    <property type="entry name" value="6-phosphogluconate dehydrogenase C-terminal domain-like"/>
    <property type="match status" value="1"/>
</dbReference>
<dbReference type="SUPFAM" id="SSF51735">
    <property type="entry name" value="NAD(P)-binding Rossmann-fold domains"/>
    <property type="match status" value="1"/>
</dbReference>
<dbReference type="PROSITE" id="PS00957">
    <property type="entry name" value="NAD_G3PDH"/>
    <property type="match status" value="1"/>
</dbReference>
<organism>
    <name type="scientific">Tolumonas auensis (strain DSM 9187 / NBRC 110442 / TA 4)</name>
    <dbReference type="NCBI Taxonomy" id="595494"/>
    <lineage>
        <taxon>Bacteria</taxon>
        <taxon>Pseudomonadati</taxon>
        <taxon>Pseudomonadota</taxon>
        <taxon>Gammaproteobacteria</taxon>
        <taxon>Aeromonadales</taxon>
        <taxon>Aeromonadaceae</taxon>
        <taxon>Tolumonas</taxon>
    </lineage>
</organism>
<feature type="chain" id="PRO_1000205870" description="Glycerol-3-phosphate dehydrogenase [NAD(P)+]">
    <location>
        <begin position="1"/>
        <end position="334"/>
    </location>
</feature>
<feature type="active site" description="Proton acceptor" evidence="1">
    <location>
        <position position="194"/>
    </location>
</feature>
<feature type="binding site" evidence="1">
    <location>
        <position position="14"/>
    </location>
    <ligand>
        <name>NADPH</name>
        <dbReference type="ChEBI" id="CHEBI:57783"/>
    </ligand>
</feature>
<feature type="binding site" evidence="1">
    <location>
        <position position="15"/>
    </location>
    <ligand>
        <name>NADPH</name>
        <dbReference type="ChEBI" id="CHEBI:57783"/>
    </ligand>
</feature>
<feature type="binding site" evidence="1">
    <location>
        <position position="35"/>
    </location>
    <ligand>
        <name>NADPH</name>
        <dbReference type="ChEBI" id="CHEBI:57783"/>
    </ligand>
</feature>
<feature type="binding site" evidence="1">
    <location>
        <position position="109"/>
    </location>
    <ligand>
        <name>NADPH</name>
        <dbReference type="ChEBI" id="CHEBI:57783"/>
    </ligand>
</feature>
<feature type="binding site" evidence="1">
    <location>
        <position position="109"/>
    </location>
    <ligand>
        <name>sn-glycerol 3-phosphate</name>
        <dbReference type="ChEBI" id="CHEBI:57597"/>
    </ligand>
</feature>
<feature type="binding site" evidence="1">
    <location>
        <position position="138"/>
    </location>
    <ligand>
        <name>sn-glycerol 3-phosphate</name>
        <dbReference type="ChEBI" id="CHEBI:57597"/>
    </ligand>
</feature>
<feature type="binding site" evidence="1">
    <location>
        <position position="140"/>
    </location>
    <ligand>
        <name>sn-glycerol 3-phosphate</name>
        <dbReference type="ChEBI" id="CHEBI:57597"/>
    </ligand>
</feature>
<feature type="binding site" evidence="1">
    <location>
        <position position="142"/>
    </location>
    <ligand>
        <name>NADPH</name>
        <dbReference type="ChEBI" id="CHEBI:57783"/>
    </ligand>
</feature>
<feature type="binding site" evidence="1">
    <location>
        <position position="194"/>
    </location>
    <ligand>
        <name>sn-glycerol 3-phosphate</name>
        <dbReference type="ChEBI" id="CHEBI:57597"/>
    </ligand>
</feature>
<feature type="binding site" evidence="1">
    <location>
        <position position="247"/>
    </location>
    <ligand>
        <name>sn-glycerol 3-phosphate</name>
        <dbReference type="ChEBI" id="CHEBI:57597"/>
    </ligand>
</feature>
<feature type="binding site" evidence="1">
    <location>
        <position position="257"/>
    </location>
    <ligand>
        <name>sn-glycerol 3-phosphate</name>
        <dbReference type="ChEBI" id="CHEBI:57597"/>
    </ligand>
</feature>
<feature type="binding site" evidence="1">
    <location>
        <position position="258"/>
    </location>
    <ligand>
        <name>NADPH</name>
        <dbReference type="ChEBI" id="CHEBI:57783"/>
    </ligand>
</feature>
<feature type="binding site" evidence="1">
    <location>
        <position position="258"/>
    </location>
    <ligand>
        <name>sn-glycerol 3-phosphate</name>
        <dbReference type="ChEBI" id="CHEBI:57597"/>
    </ligand>
</feature>
<feature type="binding site" evidence="1">
    <location>
        <position position="259"/>
    </location>
    <ligand>
        <name>sn-glycerol 3-phosphate</name>
        <dbReference type="ChEBI" id="CHEBI:57597"/>
    </ligand>
</feature>
<feature type="binding site" evidence="1">
    <location>
        <position position="282"/>
    </location>
    <ligand>
        <name>NADPH</name>
        <dbReference type="ChEBI" id="CHEBI:57783"/>
    </ligand>
</feature>
<feature type="binding site" evidence="1">
    <location>
        <position position="284"/>
    </location>
    <ligand>
        <name>NADPH</name>
        <dbReference type="ChEBI" id="CHEBI:57783"/>
    </ligand>
</feature>
<reference key="1">
    <citation type="submission" date="2009-05" db="EMBL/GenBank/DDBJ databases">
        <title>Complete sequence of Tolumonas auensis DSM 9187.</title>
        <authorList>
            <consortium name="US DOE Joint Genome Institute"/>
            <person name="Lucas S."/>
            <person name="Copeland A."/>
            <person name="Lapidus A."/>
            <person name="Glavina del Rio T."/>
            <person name="Tice H."/>
            <person name="Bruce D."/>
            <person name="Goodwin L."/>
            <person name="Pitluck S."/>
            <person name="Chertkov O."/>
            <person name="Brettin T."/>
            <person name="Detter J.C."/>
            <person name="Han C."/>
            <person name="Larimer F."/>
            <person name="Land M."/>
            <person name="Hauser L."/>
            <person name="Kyrpides N."/>
            <person name="Mikhailova N."/>
            <person name="Spring S."/>
            <person name="Beller H."/>
        </authorList>
    </citation>
    <scope>NUCLEOTIDE SEQUENCE [LARGE SCALE GENOMIC DNA]</scope>
    <source>
        <strain>DSM 9187 / NBRC 110442 / TA 4</strain>
    </source>
</reference>
<evidence type="ECO:0000255" key="1">
    <source>
        <dbReference type="HAMAP-Rule" id="MF_00394"/>
    </source>
</evidence>
<sequence length="334" mass="35640">MDSAVALSVLGAGSYGTALAISLARQGQPVLLWGHDPQQVARLQQDRCNQEFLPDVPFPDSLQMTDDLAYAVSASRDLLVVVPSHVFGEVLLRIKPFMRPDTRVAWATKGLEPEHGRLLGDVAKEILGEQIPLAVLSGPTFARELAAGMPTAIAIAGTDEQFTSDMSALMHCGKSLRVYTNPDFIGLQIGGAVKNVIAIGAGLSDGLGFGANARTALITRGLVELQRLGLSLGADAKTFMGMAGLGDLVLTCTDNQSRNRRFGLALGQGKTVEQAMTEIGQVVEGYRNTKEVHVLAARQNVEMPICEQIYQILYQGKSAQDAALALLGRDQKGE</sequence>
<comment type="function">
    <text evidence="1">Catalyzes the reduction of the glycolytic intermediate dihydroxyacetone phosphate (DHAP) to sn-glycerol 3-phosphate (G3P), the key precursor for phospholipid synthesis.</text>
</comment>
<comment type="catalytic activity">
    <reaction evidence="1">
        <text>sn-glycerol 3-phosphate + NAD(+) = dihydroxyacetone phosphate + NADH + H(+)</text>
        <dbReference type="Rhea" id="RHEA:11092"/>
        <dbReference type="ChEBI" id="CHEBI:15378"/>
        <dbReference type="ChEBI" id="CHEBI:57540"/>
        <dbReference type="ChEBI" id="CHEBI:57597"/>
        <dbReference type="ChEBI" id="CHEBI:57642"/>
        <dbReference type="ChEBI" id="CHEBI:57945"/>
        <dbReference type="EC" id="1.1.1.94"/>
    </reaction>
    <physiologicalReaction direction="right-to-left" evidence="1">
        <dbReference type="Rhea" id="RHEA:11094"/>
    </physiologicalReaction>
</comment>
<comment type="catalytic activity">
    <reaction evidence="1">
        <text>sn-glycerol 3-phosphate + NADP(+) = dihydroxyacetone phosphate + NADPH + H(+)</text>
        <dbReference type="Rhea" id="RHEA:11096"/>
        <dbReference type="ChEBI" id="CHEBI:15378"/>
        <dbReference type="ChEBI" id="CHEBI:57597"/>
        <dbReference type="ChEBI" id="CHEBI:57642"/>
        <dbReference type="ChEBI" id="CHEBI:57783"/>
        <dbReference type="ChEBI" id="CHEBI:58349"/>
        <dbReference type="EC" id="1.1.1.94"/>
    </reaction>
    <physiologicalReaction direction="right-to-left" evidence="1">
        <dbReference type="Rhea" id="RHEA:11098"/>
    </physiologicalReaction>
</comment>
<comment type="pathway">
    <text evidence="1">Membrane lipid metabolism; glycerophospholipid metabolism.</text>
</comment>
<comment type="subcellular location">
    <subcellularLocation>
        <location evidence="1">Cytoplasm</location>
    </subcellularLocation>
</comment>
<comment type="similarity">
    <text evidence="1">Belongs to the NAD-dependent glycerol-3-phosphate dehydrogenase family.</text>
</comment>
<gene>
    <name evidence="1" type="primary">gpsA</name>
    <name type="ordered locus">Tola_0509</name>
</gene>
<protein>
    <recommendedName>
        <fullName evidence="1">Glycerol-3-phosphate dehydrogenase [NAD(P)+]</fullName>
        <ecNumber evidence="1">1.1.1.94</ecNumber>
    </recommendedName>
    <alternativeName>
        <fullName evidence="1">NAD(P)(+)-dependent glycerol-3-phosphate dehydrogenase</fullName>
    </alternativeName>
    <alternativeName>
        <fullName evidence="1">NAD(P)H-dependent dihydroxyacetone-phosphate reductase</fullName>
    </alternativeName>
</protein>
<name>GPDA_TOLAT</name>
<accession>C4LA09</accession>